<proteinExistence type="inferred from homology"/>
<keyword id="KW-1017">Isopeptide bond</keyword>
<keyword id="KW-1185">Reference proteome</keyword>
<keyword id="KW-0833">Ubl conjugation pathway</keyword>
<gene>
    <name evidence="1" type="primary">pup</name>
    <name type="ordered locus">RMDY18_10360</name>
</gene>
<reference key="1">
    <citation type="submission" date="2009-07" db="EMBL/GenBank/DDBJ databases">
        <title>Complete genome sequence of Rothia mucilaginosa DJ.</title>
        <authorList>
            <person name="Yamane K."/>
            <person name="Nambu T."/>
            <person name="Mashimo C."/>
            <person name="Sugimori C."/>
            <person name="Yamanaka T."/>
            <person name="Leung K."/>
            <person name="Fukushima H."/>
        </authorList>
    </citation>
    <scope>NUCLEOTIDE SEQUENCE [LARGE SCALE GENOMIC DNA]</scope>
    <source>
        <strain>DY-18</strain>
    </source>
</reference>
<sequence>MSRERISAQQTETTAAEQEQELTLAASHVVSDVSEVDDLLDEIDGLLAENAEDFVTGFVQKGGE</sequence>
<organism>
    <name type="scientific">Rothia mucilaginosa (strain DY-18)</name>
    <name type="common">Stomatococcus mucilaginosus</name>
    <dbReference type="NCBI Taxonomy" id="680646"/>
    <lineage>
        <taxon>Bacteria</taxon>
        <taxon>Bacillati</taxon>
        <taxon>Actinomycetota</taxon>
        <taxon>Actinomycetes</taxon>
        <taxon>Micrococcales</taxon>
        <taxon>Micrococcaceae</taxon>
        <taxon>Rothia</taxon>
    </lineage>
</organism>
<protein>
    <recommendedName>
        <fullName evidence="1">Prokaryotic ubiquitin-like protein Pup</fullName>
    </recommendedName>
    <alternativeName>
        <fullName evidence="1">Bacterial ubiquitin-like modifier</fullName>
    </alternativeName>
</protein>
<accession>D2NT92</accession>
<name>PUP_ROTMD</name>
<comment type="function">
    <text evidence="1">Protein modifier that is covalently attached to lysine residues of substrate proteins, thereby targeting them for proteasomal degradation. The tagging system is termed pupylation.</text>
</comment>
<comment type="pathway">
    <text evidence="1">Protein degradation; proteasomal Pup-dependent pathway.</text>
</comment>
<comment type="subunit">
    <text evidence="1">Strongly interacts with the proteasome-associated ATPase ARC through a hydrophobic interface; the interacting region of Pup lies in its C-terminal half. There is one Pup binding site per ARC hexamer ring.</text>
</comment>
<comment type="domain">
    <text evidence="1">The N-terminal unstructured half of Pup provides a signal required to initiate unfolding and degradation by the proteasome but is not needed for pupylation, while the C-terminal helical half of Pup interacts with ARC to target proteins to the proteasome.</text>
</comment>
<comment type="similarity">
    <text evidence="1">Belongs to the prokaryotic ubiquitin-like protein family.</text>
</comment>
<feature type="chain" id="PRO_0000396000" description="Prokaryotic ubiquitin-like protein Pup">
    <location>
        <begin position="1"/>
        <end position="64"/>
    </location>
</feature>
<feature type="region of interest" description="ARC ATPase binding" evidence="1">
    <location>
        <begin position="20"/>
        <end position="58"/>
    </location>
</feature>
<feature type="cross-link" description="Isoglutamyl lysine isopeptide (Glu-Lys) (interchain with K-? in acceptor proteins)" evidence="1">
    <location>
        <position position="64"/>
    </location>
</feature>
<dbReference type="EMBL" id="AP011540">
    <property type="protein sequence ID" value="BAI64868.1"/>
    <property type="molecule type" value="Genomic_DNA"/>
</dbReference>
<dbReference type="RefSeq" id="WP_005506016.1">
    <property type="nucleotide sequence ID" value="NC_013715.1"/>
</dbReference>
<dbReference type="SMR" id="D2NT92"/>
<dbReference type="STRING" id="680646.RMDY18_10360"/>
<dbReference type="KEGG" id="rmu:RMDY18_10360"/>
<dbReference type="HOGENOM" id="CLU_183816_1_0_11"/>
<dbReference type="UniPathway" id="UPA00997"/>
<dbReference type="Proteomes" id="UP000001883">
    <property type="component" value="Chromosome"/>
</dbReference>
<dbReference type="GO" id="GO:0070628">
    <property type="term" value="F:proteasome binding"/>
    <property type="evidence" value="ECO:0007669"/>
    <property type="project" value="UniProtKB-UniRule"/>
</dbReference>
<dbReference type="GO" id="GO:0031386">
    <property type="term" value="F:protein tag activity"/>
    <property type="evidence" value="ECO:0007669"/>
    <property type="project" value="UniProtKB-UniRule"/>
</dbReference>
<dbReference type="GO" id="GO:0019941">
    <property type="term" value="P:modification-dependent protein catabolic process"/>
    <property type="evidence" value="ECO:0007669"/>
    <property type="project" value="UniProtKB-UniRule"/>
</dbReference>
<dbReference type="GO" id="GO:0010498">
    <property type="term" value="P:proteasomal protein catabolic process"/>
    <property type="evidence" value="ECO:0007669"/>
    <property type="project" value="UniProtKB-UniRule"/>
</dbReference>
<dbReference type="GO" id="GO:0070490">
    <property type="term" value="P:protein pupylation"/>
    <property type="evidence" value="ECO:0007669"/>
    <property type="project" value="UniProtKB-UniRule"/>
</dbReference>
<dbReference type="HAMAP" id="MF_02106">
    <property type="entry name" value="Pup"/>
    <property type="match status" value="1"/>
</dbReference>
<dbReference type="InterPro" id="IPR008515">
    <property type="entry name" value="Ubiquitin-like_Pup"/>
</dbReference>
<dbReference type="NCBIfam" id="TIGR03687">
    <property type="entry name" value="pupylate_cterm"/>
    <property type="match status" value="1"/>
</dbReference>
<dbReference type="Pfam" id="PF05639">
    <property type="entry name" value="Pup"/>
    <property type="match status" value="1"/>
</dbReference>
<evidence type="ECO:0000255" key="1">
    <source>
        <dbReference type="HAMAP-Rule" id="MF_02106"/>
    </source>
</evidence>